<accession>Q3JQJ0</accession>
<protein>
    <recommendedName>
        <fullName evidence="1">Probable Fe(2+)-trafficking protein</fullName>
    </recommendedName>
</protein>
<reference key="1">
    <citation type="journal article" date="2010" name="Genome Biol. Evol.">
        <title>Continuing evolution of Burkholderia mallei through genome reduction and large-scale rearrangements.</title>
        <authorList>
            <person name="Losada L."/>
            <person name="Ronning C.M."/>
            <person name="DeShazer D."/>
            <person name="Woods D."/>
            <person name="Fedorova N."/>
            <person name="Kim H.S."/>
            <person name="Shabalina S.A."/>
            <person name="Pearson T.R."/>
            <person name="Brinkac L."/>
            <person name="Tan P."/>
            <person name="Nandi T."/>
            <person name="Crabtree J."/>
            <person name="Badger J."/>
            <person name="Beckstrom-Sternberg S."/>
            <person name="Saqib M."/>
            <person name="Schutzer S.E."/>
            <person name="Keim P."/>
            <person name="Nierman W.C."/>
        </authorList>
    </citation>
    <scope>NUCLEOTIDE SEQUENCE [LARGE SCALE GENOMIC DNA]</scope>
    <source>
        <strain>1710b</strain>
    </source>
</reference>
<organism>
    <name type="scientific">Burkholderia pseudomallei (strain 1710b)</name>
    <dbReference type="NCBI Taxonomy" id="320372"/>
    <lineage>
        <taxon>Bacteria</taxon>
        <taxon>Pseudomonadati</taxon>
        <taxon>Pseudomonadota</taxon>
        <taxon>Betaproteobacteria</taxon>
        <taxon>Burkholderiales</taxon>
        <taxon>Burkholderiaceae</taxon>
        <taxon>Burkholderia</taxon>
        <taxon>pseudomallei group</taxon>
    </lineage>
</organism>
<feature type="chain" id="PRO_0000246095" description="Probable Fe(2+)-trafficking protein">
    <location>
        <begin position="1"/>
        <end position="91"/>
    </location>
</feature>
<feature type="turn" evidence="2">
    <location>
        <begin position="8"/>
        <end position="10"/>
    </location>
</feature>
<feature type="strand" evidence="2">
    <location>
        <begin position="21"/>
        <end position="24"/>
    </location>
</feature>
<feature type="helix" evidence="2">
    <location>
        <begin position="25"/>
        <end position="30"/>
    </location>
</feature>
<feature type="turn" evidence="2">
    <location>
        <begin position="31"/>
        <end position="33"/>
    </location>
</feature>
<feature type="helix" evidence="2">
    <location>
        <begin position="38"/>
        <end position="53"/>
    </location>
</feature>
<feature type="helix" evidence="2">
    <location>
        <begin position="61"/>
        <end position="74"/>
    </location>
</feature>
<feature type="turn" evidence="2">
    <location>
        <begin position="75"/>
        <end position="77"/>
    </location>
</feature>
<evidence type="ECO:0000255" key="1">
    <source>
        <dbReference type="HAMAP-Rule" id="MF_00686"/>
    </source>
</evidence>
<evidence type="ECO:0007829" key="2">
    <source>
        <dbReference type="PDB" id="2MZY"/>
    </source>
</evidence>
<gene>
    <name type="ordered locus">BURPS1710b_2778</name>
</gene>
<keyword id="KW-0002">3D-structure</keyword>
<keyword id="KW-0408">Iron</keyword>
<proteinExistence type="evidence at protein level"/>
<name>FETP_BURP1</name>
<sequence length="91" mass="10376">MARMIHCAKLGKEAEGLDFPPLPGELGKRLYESVSKQAWQDWLKQQTMLINENRLNMADPRARQYLMKQTEKYFFGEGADQASGYVPPAQG</sequence>
<dbReference type="EMBL" id="CP000124">
    <property type="protein sequence ID" value="ABA48438.1"/>
    <property type="molecule type" value="Genomic_DNA"/>
</dbReference>
<dbReference type="RefSeq" id="WP_004193961.1">
    <property type="nucleotide sequence ID" value="NC_007434.1"/>
</dbReference>
<dbReference type="PDB" id="2MZY">
    <property type="method" value="NMR"/>
    <property type="chains" value="A=1-91"/>
</dbReference>
<dbReference type="PDBsum" id="2MZY"/>
<dbReference type="SMR" id="Q3JQJ0"/>
<dbReference type="EnsemblBacteria" id="ABA48438">
    <property type="protein sequence ID" value="ABA48438"/>
    <property type="gene ID" value="BURPS1710b_2778"/>
</dbReference>
<dbReference type="KEGG" id="bpm:BURPS1710b_2778"/>
<dbReference type="HOGENOM" id="CLU_170994_0_0_4"/>
<dbReference type="EvolutionaryTrace" id="Q3JQJ0"/>
<dbReference type="Proteomes" id="UP000002700">
    <property type="component" value="Chromosome I"/>
</dbReference>
<dbReference type="GO" id="GO:0005829">
    <property type="term" value="C:cytosol"/>
    <property type="evidence" value="ECO:0007669"/>
    <property type="project" value="TreeGrafter"/>
</dbReference>
<dbReference type="GO" id="GO:0005506">
    <property type="term" value="F:iron ion binding"/>
    <property type="evidence" value="ECO:0007669"/>
    <property type="project" value="UniProtKB-UniRule"/>
</dbReference>
<dbReference type="GO" id="GO:0034599">
    <property type="term" value="P:cellular response to oxidative stress"/>
    <property type="evidence" value="ECO:0007669"/>
    <property type="project" value="TreeGrafter"/>
</dbReference>
<dbReference type="FunFam" id="1.10.3880.10:FF:000001">
    <property type="entry name" value="Probable Fe(2+)-trafficking protein"/>
    <property type="match status" value="1"/>
</dbReference>
<dbReference type="Gene3D" id="1.10.3880.10">
    <property type="entry name" value="Fe(II) trafficking protein YggX"/>
    <property type="match status" value="1"/>
</dbReference>
<dbReference type="HAMAP" id="MF_00686">
    <property type="entry name" value="Fe_traffic_YggX"/>
    <property type="match status" value="1"/>
</dbReference>
<dbReference type="InterPro" id="IPR007457">
    <property type="entry name" value="Fe_traffick_prot_YggX"/>
</dbReference>
<dbReference type="InterPro" id="IPR036766">
    <property type="entry name" value="Fe_traffick_prot_YggX_sf"/>
</dbReference>
<dbReference type="NCBIfam" id="NF003817">
    <property type="entry name" value="PRK05408.1"/>
    <property type="match status" value="1"/>
</dbReference>
<dbReference type="PANTHER" id="PTHR36965">
    <property type="entry name" value="FE(2+)-TRAFFICKING PROTEIN-RELATED"/>
    <property type="match status" value="1"/>
</dbReference>
<dbReference type="PANTHER" id="PTHR36965:SF1">
    <property type="entry name" value="FE(2+)-TRAFFICKING PROTEIN-RELATED"/>
    <property type="match status" value="1"/>
</dbReference>
<dbReference type="Pfam" id="PF04362">
    <property type="entry name" value="Iron_traffic"/>
    <property type="match status" value="1"/>
</dbReference>
<dbReference type="PIRSF" id="PIRSF029827">
    <property type="entry name" value="Fe_traffic_YggX"/>
    <property type="match status" value="1"/>
</dbReference>
<dbReference type="SUPFAM" id="SSF111148">
    <property type="entry name" value="YggX-like"/>
    <property type="match status" value="1"/>
</dbReference>
<comment type="function">
    <text evidence="1">Could be a mediator in iron transactions between iron acquisition and iron-requiring processes, such as synthesis and/or repair of Fe-S clusters in biosynthetic enzymes.</text>
</comment>
<comment type="similarity">
    <text evidence="1">Belongs to the Fe(2+)-trafficking protein family.</text>
</comment>